<reference key="1">
    <citation type="journal article" date="2013" name="Plant Physiol.">
        <title>A Nostoc punctiforme Sugar Transporter Necessary to Establish a Cyanobacterium-Plant Symbiosis.</title>
        <authorList>
            <person name="Ekman M."/>
            <person name="Picossi S."/>
            <person name="Campbell E.L."/>
            <person name="Meeks J.C."/>
            <person name="Flores E."/>
        </authorList>
    </citation>
    <scope>NUCLEOTIDE SEQUENCE [LARGE SCALE GENOMIC DNA]</scope>
    <source>
        <strain>ATCC 29133 / PCC 73102</strain>
    </source>
</reference>
<accession>B2IVH7</accession>
<sequence>MQVIRLEALSDNYIFLLYDDKRNIAAVVDPAEAQPVLKKLAELKADLVAIFNTHHHNDHVGGNKQLIEKFPQLIVYGGAEDRGRIPGQKVFLQQGDRVEFADRIAEVIFVPGHTRAHIAYYFPPQEASETGDLFCGDTLFSGGCGRLFEGTPTQMVDSLSKLRSLPDNTRIWCAHEYTLKNLQFALTVDGDNADLQRRFNEVKAYRSRGEATIPSLLGVEKHTNPFLRWDQASLQSTVKSSDGVQTFARIREMKNNF</sequence>
<keyword id="KW-0378">Hydrolase</keyword>
<keyword id="KW-0479">Metal-binding</keyword>
<keyword id="KW-1185">Reference proteome</keyword>
<keyword id="KW-0862">Zinc</keyword>
<gene>
    <name evidence="1" type="primary">gloB</name>
    <name type="ordered locus">Npun_F2829</name>
</gene>
<name>GLO2_NOSP7</name>
<comment type="function">
    <text evidence="1">Thiolesterase that catalyzes the hydrolysis of S-D-lactoyl-glutathione to form glutathione and D-lactic acid.</text>
</comment>
<comment type="catalytic activity">
    <reaction evidence="1">
        <text>an S-(2-hydroxyacyl)glutathione + H2O = a 2-hydroxy carboxylate + glutathione + H(+)</text>
        <dbReference type="Rhea" id="RHEA:21864"/>
        <dbReference type="ChEBI" id="CHEBI:15377"/>
        <dbReference type="ChEBI" id="CHEBI:15378"/>
        <dbReference type="ChEBI" id="CHEBI:57925"/>
        <dbReference type="ChEBI" id="CHEBI:58896"/>
        <dbReference type="ChEBI" id="CHEBI:71261"/>
        <dbReference type="EC" id="3.1.2.6"/>
    </reaction>
</comment>
<comment type="cofactor">
    <cofactor evidence="1">
        <name>Zn(2+)</name>
        <dbReference type="ChEBI" id="CHEBI:29105"/>
    </cofactor>
    <text evidence="1">Binds 2 Zn(2+) ions per subunit.</text>
</comment>
<comment type="pathway">
    <text evidence="1">Secondary metabolite metabolism; methylglyoxal degradation; (R)-lactate from methylglyoxal: step 2/2.</text>
</comment>
<comment type="subunit">
    <text evidence="1">Monomer.</text>
</comment>
<comment type="similarity">
    <text evidence="1">Belongs to the metallo-beta-lactamase superfamily. Glyoxalase II family.</text>
</comment>
<dbReference type="EC" id="3.1.2.6" evidence="1"/>
<dbReference type="EMBL" id="CP001037">
    <property type="protein sequence ID" value="ACC81362.1"/>
    <property type="molecule type" value="Genomic_DNA"/>
</dbReference>
<dbReference type="RefSeq" id="WP_012409355.1">
    <property type="nucleotide sequence ID" value="NC_010628.1"/>
</dbReference>
<dbReference type="SMR" id="B2IVH7"/>
<dbReference type="STRING" id="63737.Npun_F2829"/>
<dbReference type="EnsemblBacteria" id="ACC81362">
    <property type="protein sequence ID" value="ACC81362"/>
    <property type="gene ID" value="Npun_F2829"/>
</dbReference>
<dbReference type="KEGG" id="npu:Npun_F2829"/>
<dbReference type="eggNOG" id="COG0491">
    <property type="taxonomic scope" value="Bacteria"/>
</dbReference>
<dbReference type="HOGENOM" id="CLU_030571_4_1_3"/>
<dbReference type="OrthoDB" id="9802897at2"/>
<dbReference type="PhylomeDB" id="B2IVH7"/>
<dbReference type="UniPathway" id="UPA00619">
    <property type="reaction ID" value="UER00676"/>
</dbReference>
<dbReference type="Proteomes" id="UP000001191">
    <property type="component" value="Chromosome"/>
</dbReference>
<dbReference type="GO" id="GO:0004416">
    <property type="term" value="F:hydroxyacylglutathione hydrolase activity"/>
    <property type="evidence" value="ECO:0007669"/>
    <property type="project" value="UniProtKB-UniRule"/>
</dbReference>
<dbReference type="GO" id="GO:0046872">
    <property type="term" value="F:metal ion binding"/>
    <property type="evidence" value="ECO:0007669"/>
    <property type="project" value="UniProtKB-KW"/>
</dbReference>
<dbReference type="GO" id="GO:0019243">
    <property type="term" value="P:methylglyoxal catabolic process to D-lactate via S-lactoyl-glutathione"/>
    <property type="evidence" value="ECO:0007669"/>
    <property type="project" value="InterPro"/>
</dbReference>
<dbReference type="CDD" id="cd07723">
    <property type="entry name" value="hydroxyacylglutathione_hydrolase_MBL-fold"/>
    <property type="match status" value="1"/>
</dbReference>
<dbReference type="Gene3D" id="3.60.15.10">
    <property type="entry name" value="Ribonuclease Z/Hydroxyacylglutathione hydrolase-like"/>
    <property type="match status" value="1"/>
</dbReference>
<dbReference type="HAMAP" id="MF_01374">
    <property type="entry name" value="Glyoxalase_2"/>
    <property type="match status" value="1"/>
</dbReference>
<dbReference type="InterPro" id="IPR035680">
    <property type="entry name" value="Clx_II_MBL"/>
</dbReference>
<dbReference type="InterPro" id="IPR050110">
    <property type="entry name" value="Glyoxalase_II_hydrolase"/>
</dbReference>
<dbReference type="InterPro" id="IPR032282">
    <property type="entry name" value="HAGH_C"/>
</dbReference>
<dbReference type="InterPro" id="IPR017782">
    <property type="entry name" value="Hydroxyacylglutathione_Hdrlase"/>
</dbReference>
<dbReference type="InterPro" id="IPR001279">
    <property type="entry name" value="Metallo-B-lactamas"/>
</dbReference>
<dbReference type="InterPro" id="IPR036866">
    <property type="entry name" value="RibonucZ/Hydroxyglut_hydro"/>
</dbReference>
<dbReference type="NCBIfam" id="TIGR03413">
    <property type="entry name" value="GSH_gloB"/>
    <property type="match status" value="1"/>
</dbReference>
<dbReference type="PANTHER" id="PTHR43705">
    <property type="entry name" value="HYDROXYACYLGLUTATHIONE HYDROLASE"/>
    <property type="match status" value="1"/>
</dbReference>
<dbReference type="PANTHER" id="PTHR43705:SF1">
    <property type="entry name" value="HYDROXYACYLGLUTATHIONE HYDROLASE GLOB"/>
    <property type="match status" value="1"/>
</dbReference>
<dbReference type="Pfam" id="PF16123">
    <property type="entry name" value="HAGH_C"/>
    <property type="match status" value="1"/>
</dbReference>
<dbReference type="Pfam" id="PF00753">
    <property type="entry name" value="Lactamase_B"/>
    <property type="match status" value="1"/>
</dbReference>
<dbReference type="PIRSF" id="PIRSF005457">
    <property type="entry name" value="Glx"/>
    <property type="match status" value="1"/>
</dbReference>
<dbReference type="SMART" id="SM00849">
    <property type="entry name" value="Lactamase_B"/>
    <property type="match status" value="1"/>
</dbReference>
<dbReference type="SUPFAM" id="SSF56281">
    <property type="entry name" value="Metallo-hydrolase/oxidoreductase"/>
    <property type="match status" value="1"/>
</dbReference>
<proteinExistence type="inferred from homology"/>
<protein>
    <recommendedName>
        <fullName evidence="1">Hydroxyacylglutathione hydrolase</fullName>
        <ecNumber evidence="1">3.1.2.6</ecNumber>
    </recommendedName>
    <alternativeName>
        <fullName evidence="1">Glyoxalase II</fullName>
        <shortName evidence="1">Glx II</shortName>
    </alternativeName>
</protein>
<feature type="chain" id="PRO_1000144776" description="Hydroxyacylglutathione hydrolase">
    <location>
        <begin position="1"/>
        <end position="257"/>
    </location>
</feature>
<feature type="binding site" evidence="1">
    <location>
        <position position="54"/>
    </location>
    <ligand>
        <name>Zn(2+)</name>
        <dbReference type="ChEBI" id="CHEBI:29105"/>
        <label>1</label>
    </ligand>
</feature>
<feature type="binding site" evidence="1">
    <location>
        <position position="56"/>
    </location>
    <ligand>
        <name>Zn(2+)</name>
        <dbReference type="ChEBI" id="CHEBI:29105"/>
        <label>1</label>
    </ligand>
</feature>
<feature type="binding site" evidence="1">
    <location>
        <position position="58"/>
    </location>
    <ligand>
        <name>Zn(2+)</name>
        <dbReference type="ChEBI" id="CHEBI:29105"/>
        <label>2</label>
    </ligand>
</feature>
<feature type="binding site" evidence="1">
    <location>
        <position position="59"/>
    </location>
    <ligand>
        <name>Zn(2+)</name>
        <dbReference type="ChEBI" id="CHEBI:29105"/>
        <label>2</label>
    </ligand>
</feature>
<feature type="binding site" evidence="1">
    <location>
        <position position="113"/>
    </location>
    <ligand>
        <name>Zn(2+)</name>
        <dbReference type="ChEBI" id="CHEBI:29105"/>
        <label>1</label>
    </ligand>
</feature>
<feature type="binding site" evidence="1">
    <location>
        <position position="137"/>
    </location>
    <ligand>
        <name>Zn(2+)</name>
        <dbReference type="ChEBI" id="CHEBI:29105"/>
        <label>1</label>
    </ligand>
</feature>
<feature type="binding site" evidence="1">
    <location>
        <position position="137"/>
    </location>
    <ligand>
        <name>Zn(2+)</name>
        <dbReference type="ChEBI" id="CHEBI:29105"/>
        <label>2</label>
    </ligand>
</feature>
<feature type="binding site" evidence="1">
    <location>
        <position position="175"/>
    </location>
    <ligand>
        <name>Zn(2+)</name>
        <dbReference type="ChEBI" id="CHEBI:29105"/>
        <label>2</label>
    </ligand>
</feature>
<organism>
    <name type="scientific">Nostoc punctiforme (strain ATCC 29133 / PCC 73102)</name>
    <dbReference type="NCBI Taxonomy" id="63737"/>
    <lineage>
        <taxon>Bacteria</taxon>
        <taxon>Bacillati</taxon>
        <taxon>Cyanobacteriota</taxon>
        <taxon>Cyanophyceae</taxon>
        <taxon>Nostocales</taxon>
        <taxon>Nostocaceae</taxon>
        <taxon>Nostoc</taxon>
    </lineage>
</organism>
<evidence type="ECO:0000255" key="1">
    <source>
        <dbReference type="HAMAP-Rule" id="MF_01374"/>
    </source>
</evidence>